<comment type="function">
    <text evidence="1">Catalyzes the phosphorylation of the hydroxyl group of 4-methyl-5-beta-hydroxyethylthiazole (THZ).</text>
</comment>
<comment type="catalytic activity">
    <reaction evidence="1">
        <text>5-(2-hydroxyethyl)-4-methylthiazole + ATP = 4-methyl-5-(2-phosphooxyethyl)-thiazole + ADP + H(+)</text>
        <dbReference type="Rhea" id="RHEA:24212"/>
        <dbReference type="ChEBI" id="CHEBI:15378"/>
        <dbReference type="ChEBI" id="CHEBI:17957"/>
        <dbReference type="ChEBI" id="CHEBI:30616"/>
        <dbReference type="ChEBI" id="CHEBI:58296"/>
        <dbReference type="ChEBI" id="CHEBI:456216"/>
        <dbReference type="EC" id="2.7.1.50"/>
    </reaction>
</comment>
<comment type="cofactor">
    <cofactor evidence="1">
        <name>Mg(2+)</name>
        <dbReference type="ChEBI" id="CHEBI:18420"/>
    </cofactor>
</comment>
<comment type="pathway">
    <text evidence="1">Cofactor biosynthesis; thiamine diphosphate biosynthesis; 4-methyl-5-(2-phosphoethyl)-thiazole from 5-(2-hydroxyethyl)-4-methylthiazole: step 1/1.</text>
</comment>
<comment type="similarity">
    <text evidence="1">Belongs to the Thz kinase family.</text>
</comment>
<gene>
    <name evidence="1" type="primary">thiM</name>
    <name type="ordered locus">Chy400_0401</name>
</gene>
<reference key="1">
    <citation type="submission" date="2009-01" db="EMBL/GenBank/DDBJ databases">
        <title>Complete sequence of Chloroflexus sp. Y-400-fl.</title>
        <authorList>
            <consortium name="US DOE Joint Genome Institute"/>
            <person name="Lucas S."/>
            <person name="Copeland A."/>
            <person name="Lapidus A."/>
            <person name="Glavina del Rio T."/>
            <person name="Dalin E."/>
            <person name="Tice H."/>
            <person name="Bruce D."/>
            <person name="Goodwin L."/>
            <person name="Pitluck S."/>
            <person name="Sims D."/>
            <person name="Kiss H."/>
            <person name="Brettin T."/>
            <person name="Detter J.C."/>
            <person name="Han C."/>
            <person name="Larimer F."/>
            <person name="Land M."/>
            <person name="Hauser L."/>
            <person name="Kyrpides N."/>
            <person name="Ovchinnikova G."/>
            <person name="Bryant D.A."/>
            <person name="Richardson P."/>
        </authorList>
    </citation>
    <scope>NUCLEOTIDE SEQUENCE [LARGE SCALE GENOMIC DNA]</scope>
    <source>
        <strain>ATCC 29364 / DSM 637 / Y-400-fl</strain>
    </source>
</reference>
<protein>
    <recommendedName>
        <fullName evidence="1">Hydroxyethylthiazole kinase</fullName>
        <ecNumber evidence="1">2.7.1.50</ecNumber>
    </recommendedName>
    <alternativeName>
        <fullName evidence="1">4-methyl-5-beta-hydroxyethylthiazole kinase</fullName>
        <shortName evidence="1">TH kinase</shortName>
        <shortName evidence="1">Thz kinase</shortName>
    </alternativeName>
</protein>
<dbReference type="EC" id="2.7.1.50" evidence="1"/>
<dbReference type="EMBL" id="CP001364">
    <property type="protein sequence ID" value="ACM51840.1"/>
    <property type="molecule type" value="Genomic_DNA"/>
</dbReference>
<dbReference type="SMR" id="B9LIA5"/>
<dbReference type="KEGG" id="chl:Chy400_0401"/>
<dbReference type="HOGENOM" id="CLU_019943_0_1_0"/>
<dbReference type="OrthoDB" id="9778146at2"/>
<dbReference type="UniPathway" id="UPA00060">
    <property type="reaction ID" value="UER00139"/>
</dbReference>
<dbReference type="GO" id="GO:0005524">
    <property type="term" value="F:ATP binding"/>
    <property type="evidence" value="ECO:0007669"/>
    <property type="project" value="UniProtKB-UniRule"/>
</dbReference>
<dbReference type="GO" id="GO:0004417">
    <property type="term" value="F:hydroxyethylthiazole kinase activity"/>
    <property type="evidence" value="ECO:0007669"/>
    <property type="project" value="UniProtKB-UniRule"/>
</dbReference>
<dbReference type="GO" id="GO:0000287">
    <property type="term" value="F:magnesium ion binding"/>
    <property type="evidence" value="ECO:0007669"/>
    <property type="project" value="UniProtKB-UniRule"/>
</dbReference>
<dbReference type="GO" id="GO:0009228">
    <property type="term" value="P:thiamine biosynthetic process"/>
    <property type="evidence" value="ECO:0007669"/>
    <property type="project" value="UniProtKB-KW"/>
</dbReference>
<dbReference type="GO" id="GO:0009229">
    <property type="term" value="P:thiamine diphosphate biosynthetic process"/>
    <property type="evidence" value="ECO:0007669"/>
    <property type="project" value="UniProtKB-UniRule"/>
</dbReference>
<dbReference type="CDD" id="cd01170">
    <property type="entry name" value="THZ_kinase"/>
    <property type="match status" value="1"/>
</dbReference>
<dbReference type="Gene3D" id="3.40.1190.20">
    <property type="match status" value="1"/>
</dbReference>
<dbReference type="HAMAP" id="MF_00228">
    <property type="entry name" value="Thz_kinase"/>
    <property type="match status" value="1"/>
</dbReference>
<dbReference type="InterPro" id="IPR000417">
    <property type="entry name" value="Hyethyz_kinase"/>
</dbReference>
<dbReference type="InterPro" id="IPR029056">
    <property type="entry name" value="Ribokinase-like"/>
</dbReference>
<dbReference type="NCBIfam" id="NF006830">
    <property type="entry name" value="PRK09355.1"/>
    <property type="match status" value="1"/>
</dbReference>
<dbReference type="NCBIfam" id="TIGR00694">
    <property type="entry name" value="thiM"/>
    <property type="match status" value="1"/>
</dbReference>
<dbReference type="Pfam" id="PF02110">
    <property type="entry name" value="HK"/>
    <property type="match status" value="1"/>
</dbReference>
<dbReference type="PIRSF" id="PIRSF000513">
    <property type="entry name" value="Thz_kinase"/>
    <property type="match status" value="1"/>
</dbReference>
<dbReference type="PRINTS" id="PR01099">
    <property type="entry name" value="HYETHTZKNASE"/>
</dbReference>
<dbReference type="SUPFAM" id="SSF53613">
    <property type="entry name" value="Ribokinase-like"/>
    <property type="match status" value="1"/>
</dbReference>
<organism>
    <name type="scientific">Chloroflexus aurantiacus (strain ATCC 29364 / DSM 637 / Y-400-fl)</name>
    <dbReference type="NCBI Taxonomy" id="480224"/>
    <lineage>
        <taxon>Bacteria</taxon>
        <taxon>Bacillati</taxon>
        <taxon>Chloroflexota</taxon>
        <taxon>Chloroflexia</taxon>
        <taxon>Chloroflexales</taxon>
        <taxon>Chloroflexineae</taxon>
        <taxon>Chloroflexaceae</taxon>
        <taxon>Chloroflexus</taxon>
    </lineage>
</organism>
<evidence type="ECO:0000255" key="1">
    <source>
        <dbReference type="HAMAP-Rule" id="MF_00228"/>
    </source>
</evidence>
<feature type="chain" id="PRO_1000198112" description="Hydroxyethylthiazole kinase">
    <location>
        <begin position="1"/>
        <end position="269"/>
    </location>
</feature>
<feature type="binding site" evidence="1">
    <location>
        <position position="46"/>
    </location>
    <ligand>
        <name>substrate</name>
    </ligand>
</feature>
<feature type="binding site" evidence="1">
    <location>
        <position position="122"/>
    </location>
    <ligand>
        <name>ATP</name>
        <dbReference type="ChEBI" id="CHEBI:30616"/>
    </ligand>
</feature>
<feature type="binding site" evidence="1">
    <location>
        <position position="168"/>
    </location>
    <ligand>
        <name>ATP</name>
        <dbReference type="ChEBI" id="CHEBI:30616"/>
    </ligand>
</feature>
<feature type="binding site" evidence="1">
    <location>
        <position position="195"/>
    </location>
    <ligand>
        <name>substrate</name>
    </ligand>
</feature>
<accession>B9LIA5</accession>
<proteinExistence type="inferred from homology"/>
<keyword id="KW-0067">ATP-binding</keyword>
<keyword id="KW-0418">Kinase</keyword>
<keyword id="KW-0460">Magnesium</keyword>
<keyword id="KW-0479">Metal-binding</keyword>
<keyword id="KW-0547">Nucleotide-binding</keyword>
<keyword id="KW-0784">Thiamine biosynthesis</keyword>
<keyword id="KW-0808">Transferase</keyword>
<name>THIM_CHLSY</name>
<sequence length="269" mass="28199">MTLNERIAELRERVRQQRPLIHHITNFVVMNDTANVTLHIGGLPVMAHDRAEVAEMVTAAGALVLNVGTLSPDWIEAMLIAGRRANELGIPIVLDPVGAGATSLRTASNRRLLEELQIAVVRGNSGEIGALAGMGGVVKGVETVVEVDDPTAAAKALAQQYRTVVAVTGRQDVVTDGKRVFLVDNGHEWLKTLTGTGCSATTVIAAFAAVEREYPFAAAAALACFGLAAELAAPAARGPASFKVAFYDAIYHLSADQIRAGARVTAVAG</sequence>